<protein>
    <recommendedName>
        <fullName evidence="1">Ribosomal RNA small subunit methyltransferase A</fullName>
        <ecNumber evidence="1">2.1.1.182</ecNumber>
    </recommendedName>
    <alternativeName>
        <fullName evidence="1">16S rRNA (adenine(1518)-N(6)/adenine(1519)-N(6))-dimethyltransferase</fullName>
    </alternativeName>
    <alternativeName>
        <fullName evidence="1">16S rRNA dimethyladenosine transferase</fullName>
    </alternativeName>
    <alternativeName>
        <fullName evidence="1">16S rRNA dimethylase</fullName>
    </alternativeName>
    <alternativeName>
        <fullName evidence="1">S-adenosylmethionine-6-N', N'-adenosyl(rRNA) dimethyltransferase</fullName>
    </alternativeName>
</protein>
<reference key="1">
    <citation type="journal article" date="2009" name="J. Bacteriol.">
        <title>Complete and draft genome sequences of six members of the Aquificales.</title>
        <authorList>
            <person name="Reysenbach A.-L."/>
            <person name="Hamamura N."/>
            <person name="Podar M."/>
            <person name="Griffiths E."/>
            <person name="Ferreira S."/>
            <person name="Hochstein R."/>
            <person name="Heidelberg J."/>
            <person name="Johnson J."/>
            <person name="Mead D."/>
            <person name="Pohorille A."/>
            <person name="Sarmiento M."/>
            <person name="Schweighofer K."/>
            <person name="Seshadri R."/>
            <person name="Voytek M.A."/>
        </authorList>
    </citation>
    <scope>NUCLEOTIDE SEQUENCE [LARGE SCALE GENOMIC DNA]</scope>
    <source>
        <strain>Y04AAS1</strain>
    </source>
</reference>
<feature type="chain" id="PRO_1000194385" description="Ribosomal RNA small subunit methyltransferase A">
    <location>
        <begin position="1"/>
        <end position="252"/>
    </location>
</feature>
<feature type="binding site" evidence="1">
    <location>
        <position position="11"/>
    </location>
    <ligand>
        <name>S-adenosyl-L-methionine</name>
        <dbReference type="ChEBI" id="CHEBI:59789"/>
    </ligand>
</feature>
<feature type="binding site" evidence="1">
    <location>
        <position position="13"/>
    </location>
    <ligand>
        <name>S-adenosyl-L-methionine</name>
        <dbReference type="ChEBI" id="CHEBI:59789"/>
    </ligand>
</feature>
<feature type="binding site" evidence="1">
    <location>
        <position position="38"/>
    </location>
    <ligand>
        <name>S-adenosyl-L-methionine</name>
        <dbReference type="ChEBI" id="CHEBI:59789"/>
    </ligand>
</feature>
<feature type="binding site" evidence="1">
    <location>
        <position position="60"/>
    </location>
    <ligand>
        <name>S-adenosyl-L-methionine</name>
        <dbReference type="ChEBI" id="CHEBI:59789"/>
    </ligand>
</feature>
<feature type="binding site" evidence="1">
    <location>
        <position position="82"/>
    </location>
    <ligand>
        <name>S-adenosyl-L-methionine</name>
        <dbReference type="ChEBI" id="CHEBI:59789"/>
    </ligand>
</feature>
<feature type="binding site" evidence="1">
    <location>
        <position position="99"/>
    </location>
    <ligand>
        <name>S-adenosyl-L-methionine</name>
        <dbReference type="ChEBI" id="CHEBI:59789"/>
    </ligand>
</feature>
<name>RSMA_HYDS0</name>
<accession>B4U9C8</accession>
<sequence length="252" mass="29381">MLKPKKTFGQNFLKSKNIAHSIVELLDVKEDDTVIEIGPGLGALTEFLYQKPKKELILVELDKDIFGLLEKKYKNATLLNEDASLVDLSSYKNLKIIGNLPYNMYASILINMINQEKHISKMVFMLQKEVGERLITDSKDKSWLWAYANTYFNIHYAFSVPGRFFEPVPKVTSCVLVFDKKEDTPSFEKQNYMDFLKKMFSNRRKMLKHKLNNIEDKYALKRVEELSLEDIKYIYNTLSCFNKNIFTSTPAL</sequence>
<comment type="function">
    <text evidence="1">Specifically dimethylates two adjacent adenosines (A1518 and A1519) in the loop of a conserved hairpin near the 3'-end of 16S rRNA in the 30S particle. May play a critical role in biogenesis of 30S subunits.</text>
</comment>
<comment type="catalytic activity">
    <reaction evidence="1">
        <text>adenosine(1518)/adenosine(1519) in 16S rRNA + 4 S-adenosyl-L-methionine = N(6)-dimethyladenosine(1518)/N(6)-dimethyladenosine(1519) in 16S rRNA + 4 S-adenosyl-L-homocysteine + 4 H(+)</text>
        <dbReference type="Rhea" id="RHEA:19609"/>
        <dbReference type="Rhea" id="RHEA-COMP:10232"/>
        <dbReference type="Rhea" id="RHEA-COMP:10233"/>
        <dbReference type="ChEBI" id="CHEBI:15378"/>
        <dbReference type="ChEBI" id="CHEBI:57856"/>
        <dbReference type="ChEBI" id="CHEBI:59789"/>
        <dbReference type="ChEBI" id="CHEBI:74411"/>
        <dbReference type="ChEBI" id="CHEBI:74493"/>
        <dbReference type="EC" id="2.1.1.182"/>
    </reaction>
</comment>
<comment type="subcellular location">
    <subcellularLocation>
        <location evidence="1">Cytoplasm</location>
    </subcellularLocation>
</comment>
<comment type="similarity">
    <text evidence="1">Belongs to the class I-like SAM-binding methyltransferase superfamily. rRNA adenine N(6)-methyltransferase family. RsmA subfamily.</text>
</comment>
<proteinExistence type="inferred from homology"/>
<organism>
    <name type="scientific">Hydrogenobaculum sp. (strain Y04AAS1)</name>
    <dbReference type="NCBI Taxonomy" id="380749"/>
    <lineage>
        <taxon>Bacteria</taxon>
        <taxon>Pseudomonadati</taxon>
        <taxon>Aquificota</taxon>
        <taxon>Aquificia</taxon>
        <taxon>Aquificales</taxon>
        <taxon>Aquificaceae</taxon>
        <taxon>Hydrogenobaculum</taxon>
    </lineage>
</organism>
<gene>
    <name evidence="1" type="primary">rsmA</name>
    <name evidence="1" type="synonym">ksgA</name>
    <name type="ordered locus">HY04AAS1_1053</name>
</gene>
<keyword id="KW-0963">Cytoplasm</keyword>
<keyword id="KW-0489">Methyltransferase</keyword>
<keyword id="KW-0694">RNA-binding</keyword>
<keyword id="KW-0698">rRNA processing</keyword>
<keyword id="KW-0949">S-adenosyl-L-methionine</keyword>
<keyword id="KW-0808">Transferase</keyword>
<evidence type="ECO:0000255" key="1">
    <source>
        <dbReference type="HAMAP-Rule" id="MF_00607"/>
    </source>
</evidence>
<dbReference type="EC" id="2.1.1.182" evidence="1"/>
<dbReference type="EMBL" id="CP001130">
    <property type="protein sequence ID" value="ACG57739.1"/>
    <property type="molecule type" value="Genomic_DNA"/>
</dbReference>
<dbReference type="SMR" id="B4U9C8"/>
<dbReference type="STRING" id="380749.HY04AAS1_1053"/>
<dbReference type="KEGG" id="hya:HY04AAS1_1053"/>
<dbReference type="eggNOG" id="COG0030">
    <property type="taxonomic scope" value="Bacteria"/>
</dbReference>
<dbReference type="HOGENOM" id="CLU_041220_0_1_0"/>
<dbReference type="OrthoDB" id="9814755at2"/>
<dbReference type="GO" id="GO:0005829">
    <property type="term" value="C:cytosol"/>
    <property type="evidence" value="ECO:0007669"/>
    <property type="project" value="TreeGrafter"/>
</dbReference>
<dbReference type="GO" id="GO:0052908">
    <property type="term" value="F:16S rRNA (adenine(1518)-N(6)/adenine(1519)-N(6))-dimethyltransferase activity"/>
    <property type="evidence" value="ECO:0007669"/>
    <property type="project" value="UniProtKB-EC"/>
</dbReference>
<dbReference type="GO" id="GO:0003723">
    <property type="term" value="F:RNA binding"/>
    <property type="evidence" value="ECO:0007669"/>
    <property type="project" value="UniProtKB-KW"/>
</dbReference>
<dbReference type="CDD" id="cd02440">
    <property type="entry name" value="AdoMet_MTases"/>
    <property type="match status" value="1"/>
</dbReference>
<dbReference type="Gene3D" id="1.10.8.100">
    <property type="entry name" value="Ribosomal RNA adenine dimethylase-like, domain 2"/>
    <property type="match status" value="1"/>
</dbReference>
<dbReference type="Gene3D" id="3.40.50.150">
    <property type="entry name" value="Vaccinia Virus protein VP39"/>
    <property type="match status" value="1"/>
</dbReference>
<dbReference type="HAMAP" id="MF_00607">
    <property type="entry name" value="16SrRNA_methyltr_A"/>
    <property type="match status" value="1"/>
</dbReference>
<dbReference type="InterPro" id="IPR001737">
    <property type="entry name" value="KsgA/Erm"/>
</dbReference>
<dbReference type="InterPro" id="IPR023165">
    <property type="entry name" value="rRNA_Ade_diMease-like_C"/>
</dbReference>
<dbReference type="InterPro" id="IPR020596">
    <property type="entry name" value="rRNA_Ade_Mease_Trfase_CS"/>
</dbReference>
<dbReference type="InterPro" id="IPR020598">
    <property type="entry name" value="rRNA_Ade_methylase_Trfase_N"/>
</dbReference>
<dbReference type="InterPro" id="IPR011530">
    <property type="entry name" value="rRNA_adenine_dimethylase"/>
</dbReference>
<dbReference type="InterPro" id="IPR029063">
    <property type="entry name" value="SAM-dependent_MTases_sf"/>
</dbReference>
<dbReference type="NCBIfam" id="TIGR00755">
    <property type="entry name" value="ksgA"/>
    <property type="match status" value="1"/>
</dbReference>
<dbReference type="PANTHER" id="PTHR11727">
    <property type="entry name" value="DIMETHYLADENOSINE TRANSFERASE"/>
    <property type="match status" value="1"/>
</dbReference>
<dbReference type="PANTHER" id="PTHR11727:SF7">
    <property type="entry name" value="DIMETHYLADENOSINE TRANSFERASE-RELATED"/>
    <property type="match status" value="1"/>
</dbReference>
<dbReference type="Pfam" id="PF00398">
    <property type="entry name" value="RrnaAD"/>
    <property type="match status" value="1"/>
</dbReference>
<dbReference type="SMART" id="SM00650">
    <property type="entry name" value="rADc"/>
    <property type="match status" value="1"/>
</dbReference>
<dbReference type="SUPFAM" id="SSF53335">
    <property type="entry name" value="S-adenosyl-L-methionine-dependent methyltransferases"/>
    <property type="match status" value="1"/>
</dbReference>
<dbReference type="PROSITE" id="PS01131">
    <property type="entry name" value="RRNA_A_DIMETH"/>
    <property type="match status" value="1"/>
</dbReference>
<dbReference type="PROSITE" id="PS51689">
    <property type="entry name" value="SAM_RNA_A_N6_MT"/>
    <property type="match status" value="1"/>
</dbReference>